<proteinExistence type="inferred from homology"/>
<gene>
    <name evidence="1" type="primary">lpxD</name>
    <name type="ordered locus">Pcryo_1707</name>
</gene>
<sequence length="338" mass="35733">MITIEQLISQIEQRQPVLNKAELSAEQRRLSLEGIGNLTMANRQQLSFLANPHYLSSLANTDAGAVLITEEHHEEVPNDTVALIVAVPYLAYASVSQIFARQHSFSGIHPTAFIADSAVIGNKVTIGAFCVIGEQVQIGDRSVLEAHVVIEDNTTIGTDGVIKSQVVIGHDCIIGSHVRLHAGVTIGSEGFGFAPTANPSVTGWERIAQLGRVLIGDHVRIGSQTCIDRGAIDDTVIGNHVIIDNLVQVAHNVRIGDGTAIAAHTGIAGSTTIGKRCIIGGAVGITGHIDITDDVTLSGMTMVTKSITTAGSYSSGTAAMPTANWRRAAVRFRQLGRD</sequence>
<keyword id="KW-0012">Acyltransferase</keyword>
<keyword id="KW-0441">Lipid A biosynthesis</keyword>
<keyword id="KW-0444">Lipid biosynthesis</keyword>
<keyword id="KW-0443">Lipid metabolism</keyword>
<keyword id="KW-0677">Repeat</keyword>
<keyword id="KW-0808">Transferase</keyword>
<evidence type="ECO:0000255" key="1">
    <source>
        <dbReference type="HAMAP-Rule" id="MF_00523"/>
    </source>
</evidence>
<protein>
    <recommendedName>
        <fullName evidence="1">UDP-3-O-acylglucosamine N-acyltransferase</fullName>
        <ecNumber evidence="1">2.3.1.191</ecNumber>
    </recommendedName>
</protein>
<feature type="chain" id="PRO_0000264418" description="UDP-3-O-acylglucosamine N-acyltransferase">
    <location>
        <begin position="1"/>
        <end position="338"/>
    </location>
</feature>
<feature type="active site" description="Proton acceptor" evidence="1">
    <location>
        <position position="251"/>
    </location>
</feature>
<dbReference type="EC" id="2.3.1.191" evidence="1"/>
<dbReference type="EMBL" id="CP000323">
    <property type="protein sequence ID" value="ABE75484.1"/>
    <property type="molecule type" value="Genomic_DNA"/>
</dbReference>
<dbReference type="RefSeq" id="WP_011514032.1">
    <property type="nucleotide sequence ID" value="NC_007969.1"/>
</dbReference>
<dbReference type="SMR" id="Q1QA19"/>
<dbReference type="STRING" id="335284.Pcryo_1707"/>
<dbReference type="KEGG" id="pcr:Pcryo_1707"/>
<dbReference type="eggNOG" id="COG1044">
    <property type="taxonomic scope" value="Bacteria"/>
</dbReference>
<dbReference type="HOGENOM" id="CLU_049865_0_1_6"/>
<dbReference type="UniPathway" id="UPA00973"/>
<dbReference type="Proteomes" id="UP000002425">
    <property type="component" value="Chromosome"/>
</dbReference>
<dbReference type="GO" id="GO:0016020">
    <property type="term" value="C:membrane"/>
    <property type="evidence" value="ECO:0007669"/>
    <property type="project" value="GOC"/>
</dbReference>
<dbReference type="GO" id="GO:0016410">
    <property type="term" value="F:N-acyltransferase activity"/>
    <property type="evidence" value="ECO:0007669"/>
    <property type="project" value="InterPro"/>
</dbReference>
<dbReference type="GO" id="GO:0009245">
    <property type="term" value="P:lipid A biosynthetic process"/>
    <property type="evidence" value="ECO:0007669"/>
    <property type="project" value="UniProtKB-UniRule"/>
</dbReference>
<dbReference type="CDD" id="cd03352">
    <property type="entry name" value="LbH_LpxD"/>
    <property type="match status" value="1"/>
</dbReference>
<dbReference type="Gene3D" id="2.160.10.10">
    <property type="entry name" value="Hexapeptide repeat proteins"/>
    <property type="match status" value="1"/>
</dbReference>
<dbReference type="Gene3D" id="3.40.1390.10">
    <property type="entry name" value="MurE/MurF, N-terminal domain"/>
    <property type="match status" value="1"/>
</dbReference>
<dbReference type="HAMAP" id="MF_00523">
    <property type="entry name" value="LpxD"/>
    <property type="match status" value="1"/>
</dbReference>
<dbReference type="InterPro" id="IPR001451">
    <property type="entry name" value="Hexapep"/>
</dbReference>
<dbReference type="InterPro" id="IPR018357">
    <property type="entry name" value="Hexapep_transf_CS"/>
</dbReference>
<dbReference type="InterPro" id="IPR007691">
    <property type="entry name" value="LpxD"/>
</dbReference>
<dbReference type="InterPro" id="IPR011004">
    <property type="entry name" value="Trimer_LpxA-like_sf"/>
</dbReference>
<dbReference type="InterPro" id="IPR020573">
    <property type="entry name" value="UDP_GlcNAc_AcTrfase_non-rep"/>
</dbReference>
<dbReference type="NCBIfam" id="TIGR01853">
    <property type="entry name" value="lipid_A_lpxD"/>
    <property type="match status" value="1"/>
</dbReference>
<dbReference type="NCBIfam" id="NF002060">
    <property type="entry name" value="PRK00892.1"/>
    <property type="match status" value="1"/>
</dbReference>
<dbReference type="PANTHER" id="PTHR43378">
    <property type="entry name" value="UDP-3-O-ACYLGLUCOSAMINE N-ACYLTRANSFERASE"/>
    <property type="match status" value="1"/>
</dbReference>
<dbReference type="PANTHER" id="PTHR43378:SF2">
    <property type="entry name" value="UDP-3-O-ACYLGLUCOSAMINE N-ACYLTRANSFERASE 1, MITOCHONDRIAL-RELATED"/>
    <property type="match status" value="1"/>
</dbReference>
<dbReference type="Pfam" id="PF00132">
    <property type="entry name" value="Hexapep"/>
    <property type="match status" value="2"/>
</dbReference>
<dbReference type="Pfam" id="PF04613">
    <property type="entry name" value="LpxD"/>
    <property type="match status" value="1"/>
</dbReference>
<dbReference type="SUPFAM" id="SSF51161">
    <property type="entry name" value="Trimeric LpxA-like enzymes"/>
    <property type="match status" value="1"/>
</dbReference>
<dbReference type="PROSITE" id="PS00101">
    <property type="entry name" value="HEXAPEP_TRANSFERASES"/>
    <property type="match status" value="1"/>
</dbReference>
<accession>Q1QA19</accession>
<comment type="function">
    <text evidence="1">Catalyzes the N-acylation of UDP-3-O-acylglucosamine using 3-hydroxyacyl-ACP as the acyl donor. Is involved in the biosynthesis of lipid A, a phosphorylated glycolipid that anchors the lipopolysaccharide to the outer membrane of the cell.</text>
</comment>
<comment type="catalytic activity">
    <reaction evidence="1">
        <text>a UDP-3-O-[(3R)-3-hydroxyacyl]-alpha-D-glucosamine + a (3R)-hydroxyacyl-[ACP] = a UDP-2-N,3-O-bis[(3R)-3-hydroxyacyl]-alpha-D-glucosamine + holo-[ACP] + H(+)</text>
        <dbReference type="Rhea" id="RHEA:53836"/>
        <dbReference type="Rhea" id="RHEA-COMP:9685"/>
        <dbReference type="Rhea" id="RHEA-COMP:9945"/>
        <dbReference type="ChEBI" id="CHEBI:15378"/>
        <dbReference type="ChEBI" id="CHEBI:64479"/>
        <dbReference type="ChEBI" id="CHEBI:78827"/>
        <dbReference type="ChEBI" id="CHEBI:137740"/>
        <dbReference type="ChEBI" id="CHEBI:137748"/>
        <dbReference type="EC" id="2.3.1.191"/>
    </reaction>
</comment>
<comment type="pathway">
    <text evidence="1">Bacterial outer membrane biogenesis; LPS lipid A biosynthesis.</text>
</comment>
<comment type="subunit">
    <text evidence="1">Homotrimer.</text>
</comment>
<comment type="similarity">
    <text evidence="1">Belongs to the transferase hexapeptide repeat family. LpxD subfamily.</text>
</comment>
<reference key="1">
    <citation type="submission" date="2006-03" db="EMBL/GenBank/DDBJ databases">
        <title>Complete sequence of chromosome of Psychrobacter cryohalolentis K5.</title>
        <authorList>
            <consortium name="US DOE Joint Genome Institute"/>
            <person name="Copeland A."/>
            <person name="Lucas S."/>
            <person name="Lapidus A."/>
            <person name="Barry K."/>
            <person name="Detter J.C."/>
            <person name="Glavina T."/>
            <person name="Hammon N."/>
            <person name="Israni S."/>
            <person name="Dalin E."/>
            <person name="Tice H."/>
            <person name="Pitluck S."/>
            <person name="Brettin T."/>
            <person name="Bruce D."/>
            <person name="Han C."/>
            <person name="Tapia R."/>
            <person name="Sims D.R."/>
            <person name="Gilna P."/>
            <person name="Schmutz J."/>
            <person name="Larimer F."/>
            <person name="Land M."/>
            <person name="Hauser L."/>
            <person name="Kyrpides N."/>
            <person name="Kim E."/>
            <person name="Richardson P."/>
        </authorList>
    </citation>
    <scope>NUCLEOTIDE SEQUENCE [LARGE SCALE GENOMIC DNA]</scope>
    <source>
        <strain>ATCC BAA-1226 / DSM 17306 / VKM B-2378 / K5</strain>
    </source>
</reference>
<organism>
    <name type="scientific">Psychrobacter cryohalolentis (strain ATCC BAA-1226 / DSM 17306 / VKM B-2378 / K5)</name>
    <dbReference type="NCBI Taxonomy" id="335284"/>
    <lineage>
        <taxon>Bacteria</taxon>
        <taxon>Pseudomonadati</taxon>
        <taxon>Pseudomonadota</taxon>
        <taxon>Gammaproteobacteria</taxon>
        <taxon>Moraxellales</taxon>
        <taxon>Moraxellaceae</taxon>
        <taxon>Psychrobacter</taxon>
    </lineage>
</organism>
<name>LPXD_PSYCK</name>